<keyword id="KW-1185">Reference proteome</keyword>
<keyword id="KW-0687">Ribonucleoprotein</keyword>
<keyword id="KW-0689">Ribosomal protein</keyword>
<organism>
    <name type="scientific">Bradyrhizobium sp. (strain BTAi1 / ATCC BAA-1182)</name>
    <dbReference type="NCBI Taxonomy" id="288000"/>
    <lineage>
        <taxon>Bacteria</taxon>
        <taxon>Pseudomonadati</taxon>
        <taxon>Pseudomonadota</taxon>
        <taxon>Alphaproteobacteria</taxon>
        <taxon>Hyphomicrobiales</taxon>
        <taxon>Nitrobacteraceae</taxon>
        <taxon>Bradyrhizobium</taxon>
    </lineage>
</organism>
<protein>
    <recommendedName>
        <fullName evidence="1">Large ribosomal subunit protein bL12</fullName>
    </recommendedName>
    <alternativeName>
        <fullName evidence="2">50S ribosomal protein L7/L12</fullName>
    </alternativeName>
</protein>
<reference key="1">
    <citation type="journal article" date="2007" name="Science">
        <title>Legumes symbioses: absence of nod genes in photosynthetic bradyrhizobia.</title>
        <authorList>
            <person name="Giraud E."/>
            <person name="Moulin L."/>
            <person name="Vallenet D."/>
            <person name="Barbe V."/>
            <person name="Cytryn E."/>
            <person name="Avarre J.-C."/>
            <person name="Jaubert M."/>
            <person name="Simon D."/>
            <person name="Cartieaux F."/>
            <person name="Prin Y."/>
            <person name="Bena G."/>
            <person name="Hannibal L."/>
            <person name="Fardoux J."/>
            <person name="Kojadinovic M."/>
            <person name="Vuillet L."/>
            <person name="Lajus A."/>
            <person name="Cruveiller S."/>
            <person name="Rouy Z."/>
            <person name="Mangenot S."/>
            <person name="Segurens B."/>
            <person name="Dossat C."/>
            <person name="Franck W.L."/>
            <person name="Chang W.-S."/>
            <person name="Saunders E."/>
            <person name="Bruce D."/>
            <person name="Richardson P."/>
            <person name="Normand P."/>
            <person name="Dreyfus B."/>
            <person name="Pignol D."/>
            <person name="Stacey G."/>
            <person name="Emerich D."/>
            <person name="Vermeglio A."/>
            <person name="Medigue C."/>
            <person name="Sadowsky M."/>
        </authorList>
    </citation>
    <scope>NUCLEOTIDE SEQUENCE [LARGE SCALE GENOMIC DNA]</scope>
    <source>
        <strain>BTAi1 / ATCC BAA-1182</strain>
    </source>
</reference>
<dbReference type="EMBL" id="CP000494">
    <property type="protein sequence ID" value="ABQ37082.1"/>
    <property type="molecule type" value="Genomic_DNA"/>
</dbReference>
<dbReference type="RefSeq" id="WP_012045053.1">
    <property type="nucleotide sequence ID" value="NC_009485.1"/>
</dbReference>
<dbReference type="SMR" id="A5ELN8"/>
<dbReference type="STRING" id="288000.BBta_5082"/>
<dbReference type="KEGG" id="bbt:BBta_5082"/>
<dbReference type="eggNOG" id="COG0222">
    <property type="taxonomic scope" value="Bacteria"/>
</dbReference>
<dbReference type="HOGENOM" id="CLU_086499_3_0_5"/>
<dbReference type="OrthoDB" id="9811748at2"/>
<dbReference type="Proteomes" id="UP000000246">
    <property type="component" value="Chromosome"/>
</dbReference>
<dbReference type="GO" id="GO:0022625">
    <property type="term" value="C:cytosolic large ribosomal subunit"/>
    <property type="evidence" value="ECO:0007669"/>
    <property type="project" value="TreeGrafter"/>
</dbReference>
<dbReference type="GO" id="GO:0003729">
    <property type="term" value="F:mRNA binding"/>
    <property type="evidence" value="ECO:0007669"/>
    <property type="project" value="TreeGrafter"/>
</dbReference>
<dbReference type="GO" id="GO:0003735">
    <property type="term" value="F:structural constituent of ribosome"/>
    <property type="evidence" value="ECO:0007669"/>
    <property type="project" value="InterPro"/>
</dbReference>
<dbReference type="GO" id="GO:0006412">
    <property type="term" value="P:translation"/>
    <property type="evidence" value="ECO:0007669"/>
    <property type="project" value="UniProtKB-UniRule"/>
</dbReference>
<dbReference type="CDD" id="cd00387">
    <property type="entry name" value="Ribosomal_L7_L12"/>
    <property type="match status" value="1"/>
</dbReference>
<dbReference type="FunFam" id="1.20.5.710:FF:000007">
    <property type="entry name" value="50S ribosomal protein L7/L12"/>
    <property type="match status" value="1"/>
</dbReference>
<dbReference type="FunFam" id="3.30.1390.10:FF:000001">
    <property type="entry name" value="50S ribosomal protein L7/L12"/>
    <property type="match status" value="1"/>
</dbReference>
<dbReference type="Gene3D" id="3.30.1390.10">
    <property type="match status" value="1"/>
</dbReference>
<dbReference type="Gene3D" id="1.20.5.710">
    <property type="entry name" value="Single helix bin"/>
    <property type="match status" value="1"/>
</dbReference>
<dbReference type="HAMAP" id="MF_00368">
    <property type="entry name" value="Ribosomal_bL12"/>
    <property type="match status" value="1"/>
</dbReference>
<dbReference type="InterPro" id="IPR000206">
    <property type="entry name" value="Ribosomal_bL12"/>
</dbReference>
<dbReference type="InterPro" id="IPR013823">
    <property type="entry name" value="Ribosomal_bL12_C"/>
</dbReference>
<dbReference type="InterPro" id="IPR014719">
    <property type="entry name" value="Ribosomal_bL12_C/ClpS-like"/>
</dbReference>
<dbReference type="InterPro" id="IPR008932">
    <property type="entry name" value="Ribosomal_bL12_oligo"/>
</dbReference>
<dbReference type="InterPro" id="IPR036235">
    <property type="entry name" value="Ribosomal_bL12_oligo_N_sf"/>
</dbReference>
<dbReference type="NCBIfam" id="TIGR00855">
    <property type="entry name" value="L12"/>
    <property type="match status" value="1"/>
</dbReference>
<dbReference type="PANTHER" id="PTHR45987">
    <property type="entry name" value="39S RIBOSOMAL PROTEIN L12"/>
    <property type="match status" value="1"/>
</dbReference>
<dbReference type="PANTHER" id="PTHR45987:SF4">
    <property type="entry name" value="LARGE RIBOSOMAL SUBUNIT PROTEIN BL12M"/>
    <property type="match status" value="1"/>
</dbReference>
<dbReference type="Pfam" id="PF00542">
    <property type="entry name" value="Ribosomal_L12"/>
    <property type="match status" value="1"/>
</dbReference>
<dbReference type="Pfam" id="PF16320">
    <property type="entry name" value="Ribosomal_L12_N"/>
    <property type="match status" value="1"/>
</dbReference>
<dbReference type="SUPFAM" id="SSF54736">
    <property type="entry name" value="ClpS-like"/>
    <property type="match status" value="1"/>
</dbReference>
<dbReference type="SUPFAM" id="SSF48300">
    <property type="entry name" value="Ribosomal protein L7/12, oligomerisation (N-terminal) domain"/>
    <property type="match status" value="1"/>
</dbReference>
<name>RL7_BRASB</name>
<gene>
    <name evidence="1" type="primary">rplL</name>
    <name type="ordered locus">BBta_5082</name>
</gene>
<proteinExistence type="inferred from homology"/>
<comment type="function">
    <text evidence="1">Forms part of the ribosomal stalk which helps the ribosome interact with GTP-bound translation factors. Is thus essential for accurate translation.</text>
</comment>
<comment type="subunit">
    <text evidence="1">Homodimer. Part of the ribosomal stalk of the 50S ribosomal subunit. Forms a multimeric L10(L12)X complex, where L10 forms an elongated spine to which 2 to 4 L12 dimers bind in a sequential fashion. Binds GTP-bound translation factors.</text>
</comment>
<comment type="similarity">
    <text evidence="1">Belongs to the bacterial ribosomal protein bL12 family.</text>
</comment>
<feature type="chain" id="PRO_1000006965" description="Large ribosomal subunit protein bL12">
    <location>
        <begin position="1"/>
        <end position="125"/>
    </location>
</feature>
<sequence>MADLQKIVDDLSALTVLEAAELAKLLEEKWGVSAAAAVAVAAPGAGGAAAAPAEEKTEFTVVLASAGDKKIEVIKEVRAITGLGLKEAKDLVEGAPKPVKEGVNKDEAEKIKGQLEKAGAKVELK</sequence>
<evidence type="ECO:0000255" key="1">
    <source>
        <dbReference type="HAMAP-Rule" id="MF_00368"/>
    </source>
</evidence>
<evidence type="ECO:0000305" key="2"/>
<accession>A5ELN8</accession>